<accession>Q73EK7</accession>
<proteinExistence type="inferred from homology"/>
<dbReference type="EC" id="6.3.5.-" evidence="1"/>
<dbReference type="EMBL" id="AE017194">
    <property type="protein sequence ID" value="AAS39287.1"/>
    <property type="molecule type" value="Genomic_DNA"/>
</dbReference>
<dbReference type="SMR" id="Q73EK7"/>
<dbReference type="KEGG" id="bca:BCE_0351"/>
<dbReference type="HOGENOM" id="CLU_019240_0_0_9"/>
<dbReference type="Proteomes" id="UP000002527">
    <property type="component" value="Chromosome"/>
</dbReference>
<dbReference type="GO" id="GO:0050566">
    <property type="term" value="F:asparaginyl-tRNA synthase (glutamine-hydrolyzing) activity"/>
    <property type="evidence" value="ECO:0007669"/>
    <property type="project" value="RHEA"/>
</dbReference>
<dbReference type="GO" id="GO:0005524">
    <property type="term" value="F:ATP binding"/>
    <property type="evidence" value="ECO:0007669"/>
    <property type="project" value="UniProtKB-KW"/>
</dbReference>
<dbReference type="GO" id="GO:0050567">
    <property type="term" value="F:glutaminyl-tRNA synthase (glutamine-hydrolyzing) activity"/>
    <property type="evidence" value="ECO:0007669"/>
    <property type="project" value="UniProtKB-UniRule"/>
</dbReference>
<dbReference type="GO" id="GO:0070681">
    <property type="term" value="P:glutaminyl-tRNAGln biosynthesis via transamidation"/>
    <property type="evidence" value="ECO:0007669"/>
    <property type="project" value="TreeGrafter"/>
</dbReference>
<dbReference type="GO" id="GO:0006412">
    <property type="term" value="P:translation"/>
    <property type="evidence" value="ECO:0007669"/>
    <property type="project" value="UniProtKB-UniRule"/>
</dbReference>
<dbReference type="FunFam" id="1.10.10.410:FF:000001">
    <property type="entry name" value="Aspartyl/glutamyl-tRNA(Asn/Gln) amidotransferase subunit B"/>
    <property type="match status" value="1"/>
</dbReference>
<dbReference type="FunFam" id="1.10.150.380:FF:000001">
    <property type="entry name" value="Aspartyl/glutamyl-tRNA(Asn/Gln) amidotransferase subunit B"/>
    <property type="match status" value="1"/>
</dbReference>
<dbReference type="Gene3D" id="1.10.10.410">
    <property type="match status" value="1"/>
</dbReference>
<dbReference type="Gene3D" id="1.10.150.380">
    <property type="entry name" value="GatB domain, N-terminal subdomain"/>
    <property type="match status" value="1"/>
</dbReference>
<dbReference type="HAMAP" id="MF_00121">
    <property type="entry name" value="GatB"/>
    <property type="match status" value="1"/>
</dbReference>
<dbReference type="InterPro" id="IPR017959">
    <property type="entry name" value="Asn/Gln-tRNA_amidoTrfase_suB/E"/>
</dbReference>
<dbReference type="InterPro" id="IPR006075">
    <property type="entry name" value="Asn/Gln-tRNA_Trfase_suB/E_cat"/>
</dbReference>
<dbReference type="InterPro" id="IPR018027">
    <property type="entry name" value="Asn/Gln_amidotransferase"/>
</dbReference>
<dbReference type="InterPro" id="IPR003789">
    <property type="entry name" value="Asn/Gln_tRNA_amidoTrase-B-like"/>
</dbReference>
<dbReference type="InterPro" id="IPR004413">
    <property type="entry name" value="GatB"/>
</dbReference>
<dbReference type="InterPro" id="IPR042114">
    <property type="entry name" value="GatB_C_1"/>
</dbReference>
<dbReference type="InterPro" id="IPR023168">
    <property type="entry name" value="GatB_Yqey_C_2"/>
</dbReference>
<dbReference type="InterPro" id="IPR017958">
    <property type="entry name" value="Gln-tRNA_amidoTrfase_suB_CS"/>
</dbReference>
<dbReference type="InterPro" id="IPR014746">
    <property type="entry name" value="Gln_synth/guanido_kin_cat_dom"/>
</dbReference>
<dbReference type="NCBIfam" id="TIGR00133">
    <property type="entry name" value="gatB"/>
    <property type="match status" value="1"/>
</dbReference>
<dbReference type="NCBIfam" id="NF004011">
    <property type="entry name" value="PRK05477.1-1"/>
    <property type="match status" value="1"/>
</dbReference>
<dbReference type="NCBIfam" id="NF004012">
    <property type="entry name" value="PRK05477.1-2"/>
    <property type="match status" value="1"/>
</dbReference>
<dbReference type="NCBIfam" id="NF004014">
    <property type="entry name" value="PRK05477.1-4"/>
    <property type="match status" value="1"/>
</dbReference>
<dbReference type="PANTHER" id="PTHR11659">
    <property type="entry name" value="GLUTAMYL-TRNA GLN AMIDOTRANSFERASE SUBUNIT B MITOCHONDRIAL AND PROKARYOTIC PET112-RELATED"/>
    <property type="match status" value="1"/>
</dbReference>
<dbReference type="PANTHER" id="PTHR11659:SF0">
    <property type="entry name" value="GLUTAMYL-TRNA(GLN) AMIDOTRANSFERASE SUBUNIT B, MITOCHONDRIAL"/>
    <property type="match status" value="1"/>
</dbReference>
<dbReference type="Pfam" id="PF02934">
    <property type="entry name" value="GatB_N"/>
    <property type="match status" value="1"/>
</dbReference>
<dbReference type="Pfam" id="PF02637">
    <property type="entry name" value="GatB_Yqey"/>
    <property type="match status" value="1"/>
</dbReference>
<dbReference type="SMART" id="SM00845">
    <property type="entry name" value="GatB_Yqey"/>
    <property type="match status" value="1"/>
</dbReference>
<dbReference type="SUPFAM" id="SSF89095">
    <property type="entry name" value="GatB/YqeY motif"/>
    <property type="match status" value="1"/>
</dbReference>
<dbReference type="SUPFAM" id="SSF55931">
    <property type="entry name" value="Glutamine synthetase/guanido kinase"/>
    <property type="match status" value="1"/>
</dbReference>
<dbReference type="PROSITE" id="PS01234">
    <property type="entry name" value="GATB"/>
    <property type="match status" value="1"/>
</dbReference>
<organism>
    <name type="scientific">Bacillus cereus (strain ATCC 10987 / NRS 248)</name>
    <dbReference type="NCBI Taxonomy" id="222523"/>
    <lineage>
        <taxon>Bacteria</taxon>
        <taxon>Bacillati</taxon>
        <taxon>Bacillota</taxon>
        <taxon>Bacilli</taxon>
        <taxon>Bacillales</taxon>
        <taxon>Bacillaceae</taxon>
        <taxon>Bacillus</taxon>
        <taxon>Bacillus cereus group</taxon>
    </lineage>
</organism>
<keyword id="KW-0067">ATP-binding</keyword>
<keyword id="KW-0436">Ligase</keyword>
<keyword id="KW-0547">Nucleotide-binding</keyword>
<keyword id="KW-0648">Protein biosynthesis</keyword>
<evidence type="ECO:0000255" key="1">
    <source>
        <dbReference type="HAMAP-Rule" id="MF_00121"/>
    </source>
</evidence>
<comment type="function">
    <text evidence="1">Allows the formation of correctly charged Asn-tRNA(Asn) or Gln-tRNA(Gln) through the transamidation of misacylated Asp-tRNA(Asn) or Glu-tRNA(Gln) in organisms which lack either or both of asparaginyl-tRNA or glutaminyl-tRNA synthetases. The reaction takes place in the presence of glutamine and ATP through an activated phospho-Asp-tRNA(Asn) or phospho-Glu-tRNA(Gln).</text>
</comment>
<comment type="catalytic activity">
    <reaction evidence="1">
        <text>L-glutamyl-tRNA(Gln) + L-glutamine + ATP + H2O = L-glutaminyl-tRNA(Gln) + L-glutamate + ADP + phosphate + H(+)</text>
        <dbReference type="Rhea" id="RHEA:17521"/>
        <dbReference type="Rhea" id="RHEA-COMP:9681"/>
        <dbReference type="Rhea" id="RHEA-COMP:9684"/>
        <dbReference type="ChEBI" id="CHEBI:15377"/>
        <dbReference type="ChEBI" id="CHEBI:15378"/>
        <dbReference type="ChEBI" id="CHEBI:29985"/>
        <dbReference type="ChEBI" id="CHEBI:30616"/>
        <dbReference type="ChEBI" id="CHEBI:43474"/>
        <dbReference type="ChEBI" id="CHEBI:58359"/>
        <dbReference type="ChEBI" id="CHEBI:78520"/>
        <dbReference type="ChEBI" id="CHEBI:78521"/>
        <dbReference type="ChEBI" id="CHEBI:456216"/>
    </reaction>
</comment>
<comment type="catalytic activity">
    <reaction evidence="1">
        <text>L-aspartyl-tRNA(Asn) + L-glutamine + ATP + H2O = L-asparaginyl-tRNA(Asn) + L-glutamate + ADP + phosphate + 2 H(+)</text>
        <dbReference type="Rhea" id="RHEA:14513"/>
        <dbReference type="Rhea" id="RHEA-COMP:9674"/>
        <dbReference type="Rhea" id="RHEA-COMP:9677"/>
        <dbReference type="ChEBI" id="CHEBI:15377"/>
        <dbReference type="ChEBI" id="CHEBI:15378"/>
        <dbReference type="ChEBI" id="CHEBI:29985"/>
        <dbReference type="ChEBI" id="CHEBI:30616"/>
        <dbReference type="ChEBI" id="CHEBI:43474"/>
        <dbReference type="ChEBI" id="CHEBI:58359"/>
        <dbReference type="ChEBI" id="CHEBI:78515"/>
        <dbReference type="ChEBI" id="CHEBI:78516"/>
        <dbReference type="ChEBI" id="CHEBI:456216"/>
    </reaction>
</comment>
<comment type="subunit">
    <text evidence="1">Heterotrimer of A, B and C subunits.</text>
</comment>
<comment type="similarity">
    <text evidence="1">Belongs to the GatB/GatE family. GatB subfamily.</text>
</comment>
<name>GATB_BACC1</name>
<reference key="1">
    <citation type="journal article" date="2004" name="Nucleic Acids Res.">
        <title>The genome sequence of Bacillus cereus ATCC 10987 reveals metabolic adaptations and a large plasmid related to Bacillus anthracis pXO1.</title>
        <authorList>
            <person name="Rasko D.A."/>
            <person name="Ravel J."/>
            <person name="Oekstad O.A."/>
            <person name="Helgason E."/>
            <person name="Cer R.Z."/>
            <person name="Jiang L."/>
            <person name="Shores K.A."/>
            <person name="Fouts D.E."/>
            <person name="Tourasse N.J."/>
            <person name="Angiuoli S.V."/>
            <person name="Kolonay J.F."/>
            <person name="Nelson W.C."/>
            <person name="Kolstoe A.-B."/>
            <person name="Fraser C.M."/>
            <person name="Read T.D."/>
        </authorList>
    </citation>
    <scope>NUCLEOTIDE SEQUENCE [LARGE SCALE GENOMIC DNA]</scope>
    <source>
        <strain>ATCC 10987 / NRS 248</strain>
    </source>
</reference>
<protein>
    <recommendedName>
        <fullName evidence="1">Aspartyl/glutamyl-tRNA(Asn/Gln) amidotransferase subunit B</fullName>
        <shortName evidence="1">Asp/Glu-ADT subunit B</shortName>
        <ecNumber evidence="1">6.3.5.-</ecNumber>
    </recommendedName>
</protein>
<feature type="chain" id="PRO_0000241191" description="Aspartyl/glutamyl-tRNA(Asn/Gln) amidotransferase subunit B">
    <location>
        <begin position="1"/>
        <end position="475"/>
    </location>
</feature>
<sequence length="475" mass="53220">MNLETIIGLEVHVELKTNSKIFSASPTEFGAEPNTQTSVIDLGYPGVLPTLNKEAVNFAMKAAMALNCEIATETKFDRKNYFYPDNPKAYQISQFDKPIGENGWIEIEVDGKKKRIGITRLHLEEDAGKSTHTADGSLVDYNRQGMPLIEIVSEPDMRTPEEAYAYLEKLKSIIQYTGVSDCKMEEGSLRCDANISLRPVGQEKFGTKAELKNLNSFTYVQKGLEFEQARQEKELLSGGIIQQETRRYDEATKKTILMRVKEGSDDYRYFPEPDLVELYIDDEWKEAVRASIPELPDARKARYVAELGLPAYDAHVLTLTKEMSDFFEATVADGADAKLTSNWLMGEVLAYLNKQQKELKDVALTPAGLSKMVQLIEKGTISSKIAKKVFNELIEKGGDPEEIVKAKGLVQISDEGTLRKVVTEILDNNEQSIEDFKNGKDRAIGFLVGQIMKATKGQANPPLVNKILLEEINKR</sequence>
<gene>
    <name evidence="1" type="primary">gatB</name>
    <name type="ordered locus">BCE_0351</name>
</gene>